<feature type="chain" id="PRO_1000140432" description="D-tagatose-1,6-bisphosphate aldolase subunit KbaY">
    <location>
        <begin position="1"/>
        <end position="286"/>
    </location>
</feature>
<feature type="active site" description="Proton donor" evidence="1">
    <location>
        <position position="82"/>
    </location>
</feature>
<feature type="binding site" evidence="1">
    <location>
        <position position="83"/>
    </location>
    <ligand>
        <name>Zn(2+)</name>
        <dbReference type="ChEBI" id="CHEBI:29105"/>
        <note>catalytic</note>
    </ligand>
</feature>
<feature type="binding site" evidence="1">
    <location>
        <position position="180"/>
    </location>
    <ligand>
        <name>Zn(2+)</name>
        <dbReference type="ChEBI" id="CHEBI:29105"/>
        <note>catalytic</note>
    </ligand>
</feature>
<feature type="binding site" evidence="1">
    <location>
        <position position="181"/>
    </location>
    <ligand>
        <name>dihydroxyacetone phosphate</name>
        <dbReference type="ChEBI" id="CHEBI:57642"/>
    </ligand>
</feature>
<feature type="binding site" evidence="1">
    <location>
        <position position="208"/>
    </location>
    <ligand>
        <name>Zn(2+)</name>
        <dbReference type="ChEBI" id="CHEBI:29105"/>
        <note>catalytic</note>
    </ligand>
</feature>
<feature type="binding site" evidence="1">
    <location>
        <begin position="209"/>
        <end position="211"/>
    </location>
    <ligand>
        <name>dihydroxyacetone phosphate</name>
        <dbReference type="ChEBI" id="CHEBI:57642"/>
    </ligand>
</feature>
<feature type="binding site" evidence="1">
    <location>
        <begin position="230"/>
        <end position="233"/>
    </location>
    <ligand>
        <name>dihydroxyacetone phosphate</name>
        <dbReference type="ChEBI" id="CHEBI:57642"/>
    </ligand>
</feature>
<comment type="function">
    <text evidence="1">Catalytic subunit of the tagatose-1,6-bisphosphate aldolase KbaYZ, which catalyzes the reversible aldol condensation of dihydroxyacetone phosphate (DHAP or glycerone-phosphate) with glyceraldehyde 3-phosphate (G3P) to produce tagatose 1,6-bisphosphate (TBP). Requires KbaZ subunit for full activity and stability.</text>
</comment>
<comment type="catalytic activity">
    <reaction evidence="1">
        <text>D-tagatofuranose 1,6-bisphosphate = D-glyceraldehyde 3-phosphate + dihydroxyacetone phosphate</text>
        <dbReference type="Rhea" id="RHEA:22948"/>
        <dbReference type="ChEBI" id="CHEBI:57642"/>
        <dbReference type="ChEBI" id="CHEBI:58694"/>
        <dbReference type="ChEBI" id="CHEBI:59776"/>
        <dbReference type="EC" id="4.1.2.40"/>
    </reaction>
</comment>
<comment type="cofactor">
    <cofactor evidence="1">
        <name>Zn(2+)</name>
        <dbReference type="ChEBI" id="CHEBI:29105"/>
    </cofactor>
    <text evidence="1">Binds 1 zinc ion per subunit.</text>
</comment>
<comment type="pathway">
    <text evidence="1">Carbohydrate metabolism; D-tagatose 6-phosphate degradation; D-glyceraldehyde 3-phosphate and glycerone phosphate from D-tagatose 6-phosphate: step 2/2.</text>
</comment>
<comment type="subunit">
    <text evidence="1">Homotetramer. Forms a complex with KbaZ.</text>
</comment>
<comment type="similarity">
    <text evidence="1">Belongs to the class II fructose-bisphosphate aldolase family. TagBP aldolase KbaY subfamily.</text>
</comment>
<sequence length="286" mass="31338">MSIISTKYLLQDAQANGYAVPAFNIHNAETIQAILEVCSEMRSPVILAGTPGTFKHIALEEIYALCSAYSTTYNMPLALHLDHHESLDDIRRKVHAGVRSAMIDGSHFPFDENVKLVKSVVDFCHSQDCSVEAELGRLGGVEDDMSVDAESAFLTDPQEAKRFVELTGVDSLAVAIGTAHGLYSKTPKIDFQRLAEIREVVDVPLVLHGASDVPDEFVRRTIELGVTKVNVATELKIAFAGAVKAWFAENPQGNDPRYYMRVGMDAMKEVVRNKINVCGSANRISA</sequence>
<organism>
    <name type="scientific">Escherichia coli O17:K52:H18 (strain UMN026 / ExPEC)</name>
    <dbReference type="NCBI Taxonomy" id="585056"/>
    <lineage>
        <taxon>Bacteria</taxon>
        <taxon>Pseudomonadati</taxon>
        <taxon>Pseudomonadota</taxon>
        <taxon>Gammaproteobacteria</taxon>
        <taxon>Enterobacterales</taxon>
        <taxon>Enterobacteriaceae</taxon>
        <taxon>Escherichia</taxon>
    </lineage>
</organism>
<dbReference type="EC" id="4.1.2.40" evidence="1"/>
<dbReference type="EMBL" id="CU928163">
    <property type="protein sequence ID" value="CAR14775.1"/>
    <property type="molecule type" value="Genomic_DNA"/>
</dbReference>
<dbReference type="RefSeq" id="WP_000022773.1">
    <property type="nucleotide sequence ID" value="NC_011751.1"/>
</dbReference>
<dbReference type="RefSeq" id="YP_002414280.1">
    <property type="nucleotide sequence ID" value="NC_011751.1"/>
</dbReference>
<dbReference type="SMR" id="B7NDC5"/>
<dbReference type="STRING" id="585056.ECUMN_3621"/>
<dbReference type="KEGG" id="eum:ECUMN_3621"/>
<dbReference type="PATRIC" id="fig|585056.7.peg.3801"/>
<dbReference type="HOGENOM" id="CLU_040088_0_1_6"/>
<dbReference type="UniPathway" id="UPA00704">
    <property type="reaction ID" value="UER00716"/>
</dbReference>
<dbReference type="Proteomes" id="UP000007097">
    <property type="component" value="Chromosome"/>
</dbReference>
<dbReference type="GO" id="GO:0005829">
    <property type="term" value="C:cytosol"/>
    <property type="evidence" value="ECO:0007669"/>
    <property type="project" value="TreeGrafter"/>
</dbReference>
<dbReference type="GO" id="GO:0009025">
    <property type="term" value="F:tagatose-bisphosphate aldolase activity"/>
    <property type="evidence" value="ECO:0007669"/>
    <property type="project" value="UniProtKB-UniRule"/>
</dbReference>
<dbReference type="GO" id="GO:0008270">
    <property type="term" value="F:zinc ion binding"/>
    <property type="evidence" value="ECO:0007669"/>
    <property type="project" value="UniProtKB-UniRule"/>
</dbReference>
<dbReference type="GO" id="GO:0005975">
    <property type="term" value="P:carbohydrate metabolic process"/>
    <property type="evidence" value="ECO:0007669"/>
    <property type="project" value="InterPro"/>
</dbReference>
<dbReference type="GO" id="GO:2001059">
    <property type="term" value="P:D-tagatose 6-phosphate catabolic process"/>
    <property type="evidence" value="ECO:0007669"/>
    <property type="project" value="UniProtKB-UniRule"/>
</dbReference>
<dbReference type="FunFam" id="3.20.20.70:FF:000043">
    <property type="entry name" value="D-tagatose-1,6-bisphosphate aldolase subunit GatY"/>
    <property type="match status" value="1"/>
</dbReference>
<dbReference type="Gene3D" id="3.20.20.70">
    <property type="entry name" value="Aldolase class I"/>
    <property type="match status" value="1"/>
</dbReference>
<dbReference type="HAMAP" id="MF_01293">
    <property type="entry name" value="TagBP_aldolase_KbaY"/>
    <property type="match status" value="1"/>
</dbReference>
<dbReference type="InterPro" id="IPR013785">
    <property type="entry name" value="Aldolase_TIM"/>
</dbReference>
<dbReference type="InterPro" id="IPR050246">
    <property type="entry name" value="Class_II_FBP_aldolase"/>
</dbReference>
<dbReference type="InterPro" id="IPR000771">
    <property type="entry name" value="FBA_II"/>
</dbReference>
<dbReference type="InterPro" id="IPR023788">
    <property type="entry name" value="TagBP_ald_KbaY"/>
</dbReference>
<dbReference type="InterPro" id="IPR011288">
    <property type="entry name" value="TagBP_ald_KbaY/GatY"/>
</dbReference>
<dbReference type="NCBIfam" id="TIGR00167">
    <property type="entry name" value="cbbA"/>
    <property type="match status" value="1"/>
</dbReference>
<dbReference type="NCBIfam" id="NF006626">
    <property type="entry name" value="PRK09195.1"/>
    <property type="match status" value="1"/>
</dbReference>
<dbReference type="NCBIfam" id="NF009374">
    <property type="entry name" value="PRK12737.1"/>
    <property type="match status" value="1"/>
</dbReference>
<dbReference type="NCBIfam" id="NF009375">
    <property type="entry name" value="PRK12738.1"/>
    <property type="match status" value="1"/>
</dbReference>
<dbReference type="NCBIfam" id="TIGR01858">
    <property type="entry name" value="tag_bisphos_ald"/>
    <property type="match status" value="1"/>
</dbReference>
<dbReference type="PANTHER" id="PTHR30304">
    <property type="entry name" value="D-TAGATOSE-1,6-BISPHOSPHATE ALDOLASE"/>
    <property type="match status" value="1"/>
</dbReference>
<dbReference type="PANTHER" id="PTHR30304:SF0">
    <property type="entry name" value="D-TAGATOSE-1,6-BISPHOSPHATE ALDOLASE SUBUNIT GATY-RELATED"/>
    <property type="match status" value="1"/>
</dbReference>
<dbReference type="Pfam" id="PF01116">
    <property type="entry name" value="F_bP_aldolase"/>
    <property type="match status" value="1"/>
</dbReference>
<dbReference type="PIRSF" id="PIRSF001359">
    <property type="entry name" value="F_bP_aldolase_II"/>
    <property type="match status" value="1"/>
</dbReference>
<dbReference type="SUPFAM" id="SSF51569">
    <property type="entry name" value="Aldolase"/>
    <property type="match status" value="1"/>
</dbReference>
<dbReference type="PROSITE" id="PS00602">
    <property type="entry name" value="ALDOLASE_CLASS_II_1"/>
    <property type="match status" value="1"/>
</dbReference>
<dbReference type="PROSITE" id="PS00806">
    <property type="entry name" value="ALDOLASE_CLASS_II_2"/>
    <property type="match status" value="1"/>
</dbReference>
<proteinExistence type="inferred from homology"/>
<reference key="1">
    <citation type="journal article" date="2009" name="PLoS Genet.">
        <title>Organised genome dynamics in the Escherichia coli species results in highly diverse adaptive paths.</title>
        <authorList>
            <person name="Touchon M."/>
            <person name="Hoede C."/>
            <person name="Tenaillon O."/>
            <person name="Barbe V."/>
            <person name="Baeriswyl S."/>
            <person name="Bidet P."/>
            <person name="Bingen E."/>
            <person name="Bonacorsi S."/>
            <person name="Bouchier C."/>
            <person name="Bouvet O."/>
            <person name="Calteau A."/>
            <person name="Chiapello H."/>
            <person name="Clermont O."/>
            <person name="Cruveiller S."/>
            <person name="Danchin A."/>
            <person name="Diard M."/>
            <person name="Dossat C."/>
            <person name="Karoui M.E."/>
            <person name="Frapy E."/>
            <person name="Garry L."/>
            <person name="Ghigo J.M."/>
            <person name="Gilles A.M."/>
            <person name="Johnson J."/>
            <person name="Le Bouguenec C."/>
            <person name="Lescat M."/>
            <person name="Mangenot S."/>
            <person name="Martinez-Jehanne V."/>
            <person name="Matic I."/>
            <person name="Nassif X."/>
            <person name="Oztas S."/>
            <person name="Petit M.A."/>
            <person name="Pichon C."/>
            <person name="Rouy Z."/>
            <person name="Ruf C.S."/>
            <person name="Schneider D."/>
            <person name="Tourret J."/>
            <person name="Vacherie B."/>
            <person name="Vallenet D."/>
            <person name="Medigue C."/>
            <person name="Rocha E.P.C."/>
            <person name="Denamur E."/>
        </authorList>
    </citation>
    <scope>NUCLEOTIDE SEQUENCE [LARGE SCALE GENOMIC DNA]</scope>
    <source>
        <strain>UMN026 / ExPEC</strain>
    </source>
</reference>
<evidence type="ECO:0000255" key="1">
    <source>
        <dbReference type="HAMAP-Rule" id="MF_01293"/>
    </source>
</evidence>
<protein>
    <recommendedName>
        <fullName evidence="1">D-tagatose-1,6-bisphosphate aldolase subunit KbaY</fullName>
        <shortName evidence="1">TBPA</shortName>
        <shortName evidence="1">TagBP aldolase</shortName>
        <ecNumber evidence="1">4.1.2.40</ecNumber>
    </recommendedName>
    <alternativeName>
        <fullName evidence="1">D-tagatose-bisphosphate aldolase class II</fullName>
    </alternativeName>
    <alternativeName>
        <fullName evidence="1">Ketose 1,6-bisphosphate aldolase class II</fullName>
    </alternativeName>
    <alternativeName>
        <fullName evidence="1">Tagatose-bisphosphate aldolase</fullName>
    </alternativeName>
</protein>
<keyword id="KW-0456">Lyase</keyword>
<keyword id="KW-0479">Metal-binding</keyword>
<keyword id="KW-0862">Zinc</keyword>
<gene>
    <name evidence="1" type="primary">kbaY</name>
    <name type="ordered locus">ECUMN_3621</name>
</gene>
<accession>B7NDC5</accession>
<name>KBAY_ECOLU</name>